<comment type="function">
    <text>In the wool cortex, wool keratin intermediate filaments are embedded in an interfilamentous matrix, consisting of hair keratin-associated proteins (KRTAP), which are essential for the formation of a rigid and resistant wool shaft through their extensive disulfide bond cross-linking with abundant cysteine residues of wool keratins. The matrix proteins include the high-sulfur and high-glycine-tyrosine keratins.</text>
</comment>
<comment type="subunit">
    <text>Interacts with wool keratins.</text>
</comment>
<comment type="tissue specificity">
    <text>Wool.</text>
</comment>
<comment type="similarity">
    <text evidence="2">Belongs to the KRTAP type 3 family.</text>
</comment>
<reference key="1">
    <citation type="journal article" date="1971" name="Biochem. J.">
        <title>Studies on the high-sulphur proteins of reduced merino wool. Amino acid sequence of protein SCMKB-3B 4.</title>
        <authorList>
            <person name="Swart L.S."/>
            <person name="Haylett T."/>
        </authorList>
    </citation>
    <scope>PROTEIN SEQUENCE</scope>
    <scope>ACETYLATION AT ALA-1</scope>
    <source>
        <strain>Merino</strain>
    </source>
</reference>
<name>KRA34_SHEEP</name>
<protein>
    <recommendedName>
        <fullName>Keratin, high sulfur matrix protein, IIIB4</fullName>
    </recommendedName>
</protein>
<feature type="chain" id="PRO_0000185169" description="Keratin, high sulfur matrix protein, IIIB4">
    <location>
        <begin position="1"/>
        <end position="98"/>
    </location>
</feature>
<feature type="modified residue" description="N-acetylalanine" evidence="1">
    <location>
        <position position="1"/>
    </location>
</feature>
<accession>P02445</accession>
<dbReference type="PIR" id="A02843">
    <property type="entry name" value="KRSHH4"/>
</dbReference>
<dbReference type="STRING" id="9940.ENSOARP00000004800"/>
<dbReference type="iPTMnet" id="P02445"/>
<dbReference type="PaxDb" id="9940-ENSOARP00000004800"/>
<dbReference type="eggNOG" id="KOG4726">
    <property type="taxonomic scope" value="Eukaryota"/>
</dbReference>
<dbReference type="Proteomes" id="UP000002356">
    <property type="component" value="Unplaced"/>
</dbReference>
<dbReference type="GO" id="GO:0005829">
    <property type="term" value="C:cytosol"/>
    <property type="evidence" value="ECO:0007669"/>
    <property type="project" value="UniProtKB-ARBA"/>
</dbReference>
<dbReference type="GO" id="GO:0045095">
    <property type="term" value="C:keratin filament"/>
    <property type="evidence" value="ECO:0007669"/>
    <property type="project" value="InterPro"/>
</dbReference>
<dbReference type="GO" id="GO:0005198">
    <property type="term" value="F:structural molecule activity"/>
    <property type="evidence" value="ECO:0007669"/>
    <property type="project" value="InterPro"/>
</dbReference>
<dbReference type="InterPro" id="IPR007659">
    <property type="entry name" value="Keratin_matx"/>
</dbReference>
<dbReference type="PANTHER" id="PTHR23260">
    <property type="entry name" value="KERATIN ASSOCIATED PROTEIN 3-3-RELATED"/>
    <property type="match status" value="1"/>
</dbReference>
<dbReference type="PANTHER" id="PTHR23260:SF1">
    <property type="entry name" value="KERATIN-ASSOCIATED PROTEIN 3-3"/>
    <property type="match status" value="1"/>
</dbReference>
<dbReference type="Pfam" id="PF04579">
    <property type="entry name" value="Keratin_matx"/>
    <property type="match status" value="1"/>
</dbReference>
<sequence>ACCARLCCSVPTSPATTICSSDKFCRCGVCLPSTCPHTVWFLQPTCCCDNRPPPCHIPQPSVPTCFLLNSSQPTPGLESINLTTYTQPSCEPCIPSCC</sequence>
<keyword id="KW-0007">Acetylation</keyword>
<keyword id="KW-0903">Direct protein sequencing</keyword>
<keyword id="KW-0416">Keratin</keyword>
<keyword id="KW-1185">Reference proteome</keyword>
<organism>
    <name type="scientific">Ovis aries</name>
    <name type="common">Sheep</name>
    <dbReference type="NCBI Taxonomy" id="9940"/>
    <lineage>
        <taxon>Eukaryota</taxon>
        <taxon>Metazoa</taxon>
        <taxon>Chordata</taxon>
        <taxon>Craniata</taxon>
        <taxon>Vertebrata</taxon>
        <taxon>Euteleostomi</taxon>
        <taxon>Mammalia</taxon>
        <taxon>Eutheria</taxon>
        <taxon>Laurasiatheria</taxon>
        <taxon>Artiodactyla</taxon>
        <taxon>Ruminantia</taxon>
        <taxon>Pecora</taxon>
        <taxon>Bovidae</taxon>
        <taxon>Caprinae</taxon>
        <taxon>Ovis</taxon>
    </lineage>
</organism>
<proteinExistence type="evidence at protein level"/>
<evidence type="ECO:0000269" key="1">
    <source>
    </source>
</evidence>
<evidence type="ECO:0000305" key="2"/>